<accession>P9WFJ6</accession>
<accession>L0T6S5</accession>
<accession>P64855</accession>
<accession>P71762</accession>
<sequence length="335" mass="36030">MTLPLLGPMTLSGFAHSWFFLFLFVVAGLVALYILMQLARQRRMLRFANMELLESVAPKRPSRWRHVPAILLVLSLLLFTIAMAGPTHDVRIPRNRAVVMLVIDVSQSMRATDVEPSRMVAAQEAAKQFADELTPGINLGLIAYAGTATVLVSPTTNREATKNALDKLQFADRTATGEAIFTALQAIATVGAVIGGGDTPPPARIVLFSDGKETMPTNPDNPKGAYTAARTAKDQGVPISTISFGTPYGFVEINDQRQPVPVDDETMKKVAQLSGGNSYNAATLAELRAVYSSLQQQIGYETIKGDASVGWLRLGALALALAALAALLINRRLPT</sequence>
<dbReference type="EMBL" id="AE000516">
    <property type="protein sequence ID" value="AAK45793.1"/>
    <property type="molecule type" value="Genomic_DNA"/>
</dbReference>
<dbReference type="PIR" id="D70874">
    <property type="entry name" value="D70874"/>
</dbReference>
<dbReference type="RefSeq" id="WP_003407530.1">
    <property type="nucleotide sequence ID" value="NZ_KK341227.1"/>
</dbReference>
<dbReference type="RefSeq" id="WP_010924411.1">
    <property type="nucleotide sequence ID" value="NC_002755.2"/>
</dbReference>
<dbReference type="SMR" id="P9WFJ6"/>
<dbReference type="KEGG" id="mtc:MT1528"/>
<dbReference type="PATRIC" id="fig|83331.31.peg.1643"/>
<dbReference type="HOGENOM" id="CLU_024570_2_0_11"/>
<dbReference type="Proteomes" id="UP000001020">
    <property type="component" value="Chromosome"/>
</dbReference>
<dbReference type="GO" id="GO:0005886">
    <property type="term" value="C:plasma membrane"/>
    <property type="evidence" value="ECO:0007669"/>
    <property type="project" value="UniProtKB-SubCell"/>
</dbReference>
<dbReference type="CDD" id="cd00198">
    <property type="entry name" value="vWFA"/>
    <property type="match status" value="1"/>
</dbReference>
<dbReference type="FunFam" id="3.40.50.410:FF:000078">
    <property type="entry name" value="UPF0353 protein RN09_1826"/>
    <property type="match status" value="1"/>
</dbReference>
<dbReference type="Gene3D" id="3.40.50.410">
    <property type="entry name" value="von Willebrand factor, type A domain"/>
    <property type="match status" value="1"/>
</dbReference>
<dbReference type="HAMAP" id="MF_01340">
    <property type="entry name" value="UPF0353"/>
    <property type="match status" value="1"/>
</dbReference>
<dbReference type="InterPro" id="IPR024163">
    <property type="entry name" value="Aerotolerance_reg_N"/>
</dbReference>
<dbReference type="InterPro" id="IPR022933">
    <property type="entry name" value="UPF0353"/>
</dbReference>
<dbReference type="InterPro" id="IPR050768">
    <property type="entry name" value="UPF0353/GerABKA_families"/>
</dbReference>
<dbReference type="InterPro" id="IPR002035">
    <property type="entry name" value="VWF_A"/>
</dbReference>
<dbReference type="InterPro" id="IPR036465">
    <property type="entry name" value="vWFA_dom_sf"/>
</dbReference>
<dbReference type="NCBIfam" id="NF010238">
    <property type="entry name" value="PRK13685.1"/>
    <property type="match status" value="1"/>
</dbReference>
<dbReference type="PANTHER" id="PTHR22550:SF5">
    <property type="entry name" value="LEUCINE ZIPPER PROTEIN 4"/>
    <property type="match status" value="1"/>
</dbReference>
<dbReference type="PANTHER" id="PTHR22550">
    <property type="entry name" value="SPORE GERMINATION PROTEIN"/>
    <property type="match status" value="1"/>
</dbReference>
<dbReference type="Pfam" id="PF07584">
    <property type="entry name" value="BatA"/>
    <property type="match status" value="1"/>
</dbReference>
<dbReference type="Pfam" id="PF13519">
    <property type="entry name" value="VWA_2"/>
    <property type="match status" value="1"/>
</dbReference>
<dbReference type="SMART" id="SM00327">
    <property type="entry name" value="VWA"/>
    <property type="match status" value="1"/>
</dbReference>
<dbReference type="SUPFAM" id="SSF53300">
    <property type="entry name" value="vWA-like"/>
    <property type="match status" value="1"/>
</dbReference>
<dbReference type="PROSITE" id="PS50234">
    <property type="entry name" value="VWFA"/>
    <property type="match status" value="1"/>
</dbReference>
<organism>
    <name type="scientific">Mycobacterium tuberculosis (strain CDC 1551 / Oshkosh)</name>
    <dbReference type="NCBI Taxonomy" id="83331"/>
    <lineage>
        <taxon>Bacteria</taxon>
        <taxon>Bacillati</taxon>
        <taxon>Actinomycetota</taxon>
        <taxon>Actinomycetes</taxon>
        <taxon>Mycobacteriales</taxon>
        <taxon>Mycobacteriaceae</taxon>
        <taxon>Mycobacterium</taxon>
        <taxon>Mycobacterium tuberculosis complex</taxon>
    </lineage>
</organism>
<gene>
    <name type="ordered locus">MT1528</name>
</gene>
<proteinExistence type="inferred from homology"/>
<feature type="chain" id="PRO_0000428527" description="UPF0353 protein MT1528">
    <location>
        <begin position="1"/>
        <end position="335"/>
    </location>
</feature>
<feature type="transmembrane region" description="Helical" evidence="1">
    <location>
        <begin position="18"/>
        <end position="38"/>
    </location>
</feature>
<feature type="transmembrane region" description="Helical" evidence="1">
    <location>
        <begin position="67"/>
        <end position="87"/>
    </location>
</feature>
<feature type="transmembrane region" description="Helical" evidence="1">
    <location>
        <begin position="309"/>
        <end position="329"/>
    </location>
</feature>
<feature type="domain" description="VWFA" evidence="1">
    <location>
        <begin position="98"/>
        <end position="294"/>
    </location>
</feature>
<keyword id="KW-1003">Cell membrane</keyword>
<keyword id="KW-0472">Membrane</keyword>
<keyword id="KW-1185">Reference proteome</keyword>
<keyword id="KW-0812">Transmembrane</keyword>
<keyword id="KW-1133">Transmembrane helix</keyword>
<evidence type="ECO:0000255" key="1">
    <source>
        <dbReference type="HAMAP-Rule" id="MF_01340"/>
    </source>
</evidence>
<protein>
    <recommendedName>
        <fullName evidence="1">UPF0353 protein MT1528</fullName>
    </recommendedName>
</protein>
<name>Y1481_MYCTO</name>
<comment type="subcellular location">
    <subcellularLocation>
        <location evidence="1">Cell membrane</location>
        <topology evidence="1">Multi-pass membrane protein</topology>
    </subcellularLocation>
</comment>
<comment type="similarity">
    <text evidence="1">Belongs to the UPF0353 family.</text>
</comment>
<reference key="1">
    <citation type="journal article" date="2002" name="J. Bacteriol.">
        <title>Whole-genome comparison of Mycobacterium tuberculosis clinical and laboratory strains.</title>
        <authorList>
            <person name="Fleischmann R.D."/>
            <person name="Alland D."/>
            <person name="Eisen J.A."/>
            <person name="Carpenter L."/>
            <person name="White O."/>
            <person name="Peterson J.D."/>
            <person name="DeBoy R.T."/>
            <person name="Dodson R.J."/>
            <person name="Gwinn M.L."/>
            <person name="Haft D.H."/>
            <person name="Hickey E.K."/>
            <person name="Kolonay J.F."/>
            <person name="Nelson W.C."/>
            <person name="Umayam L.A."/>
            <person name="Ermolaeva M.D."/>
            <person name="Salzberg S.L."/>
            <person name="Delcher A."/>
            <person name="Utterback T.R."/>
            <person name="Weidman J.F."/>
            <person name="Khouri H.M."/>
            <person name="Gill J."/>
            <person name="Mikula A."/>
            <person name="Bishai W."/>
            <person name="Jacobs W.R. Jr."/>
            <person name="Venter J.C."/>
            <person name="Fraser C.M."/>
        </authorList>
    </citation>
    <scope>NUCLEOTIDE SEQUENCE [LARGE SCALE GENOMIC DNA]</scope>
    <source>
        <strain>CDC 1551 / Oshkosh</strain>
    </source>
</reference>